<name>PSC2_RAT</name>
<protein>
    <recommendedName>
        <fullName>Prostatic steroid-binding protein C2</fullName>
    </recommendedName>
    <alternativeName>
        <fullName>Prostatein peptide C2</fullName>
    </alternativeName>
</protein>
<dbReference type="EMBL" id="X05034">
    <property type="protein sequence ID" value="CAA28708.1"/>
    <property type="molecule type" value="Genomic_DNA"/>
</dbReference>
<dbReference type="EMBL" id="V01256">
    <property type="protein sequence ID" value="CAA24569.1"/>
    <property type="molecule type" value="mRNA"/>
</dbReference>
<dbReference type="EMBL" id="J00776">
    <property type="protein sequence ID" value="AAA51641.1"/>
    <property type="molecule type" value="mRNA"/>
</dbReference>
<dbReference type="PIR" id="A03251">
    <property type="entry name" value="BORT2"/>
</dbReference>
<dbReference type="RefSeq" id="NP_997476.2">
    <property type="nucleotide sequence ID" value="NM_207593.2"/>
</dbReference>
<dbReference type="SMR" id="P02781"/>
<dbReference type="FunCoup" id="P02781">
    <property type="interactions" value="11"/>
</dbReference>
<dbReference type="STRING" id="10116.ENSRNOP00000027498"/>
<dbReference type="PaxDb" id="10116-ENSRNOP00000027498"/>
<dbReference type="Ensembl" id="ENSRNOT00000027498.4">
    <property type="protein sequence ID" value="ENSRNOP00000027498.3"/>
    <property type="gene ID" value="ENSRNOG00000020301.6"/>
</dbReference>
<dbReference type="GeneID" id="293731"/>
<dbReference type="KEGG" id="rno:293731"/>
<dbReference type="AGR" id="RGD:1302961"/>
<dbReference type="CTD" id="404552"/>
<dbReference type="RGD" id="1302961">
    <property type="gene designation" value="Psbpc2"/>
</dbReference>
<dbReference type="GeneTree" id="ENSGT00530000063866"/>
<dbReference type="HOGENOM" id="CLU_166234_0_0_1"/>
<dbReference type="InParanoid" id="P02781"/>
<dbReference type="OMA" id="CCYEANG"/>
<dbReference type="OrthoDB" id="9535440at2759"/>
<dbReference type="TreeFam" id="TF338526"/>
<dbReference type="PRO" id="PR:P02781"/>
<dbReference type="Proteomes" id="UP000002494">
    <property type="component" value="Chromosome 1"/>
</dbReference>
<dbReference type="GO" id="GO:0005576">
    <property type="term" value="C:extracellular region"/>
    <property type="evidence" value="ECO:0000304"/>
    <property type="project" value="RGD"/>
</dbReference>
<dbReference type="GO" id="GO:0005615">
    <property type="term" value="C:extracellular space"/>
    <property type="evidence" value="ECO:0000318"/>
    <property type="project" value="GO_Central"/>
</dbReference>
<dbReference type="GO" id="GO:0005496">
    <property type="term" value="F:steroid binding"/>
    <property type="evidence" value="ECO:0000304"/>
    <property type="project" value="RGD"/>
</dbReference>
<dbReference type="InterPro" id="IPR016126">
    <property type="entry name" value="Secretoglobin"/>
</dbReference>
<dbReference type="InterPro" id="IPR035960">
    <property type="entry name" value="Secretoglobin_sf"/>
</dbReference>
<dbReference type="PANTHER" id="PTHR11332">
    <property type="entry name" value="SECRETOGLOBIN FAMILY 1D"/>
    <property type="match status" value="1"/>
</dbReference>
<dbReference type="PANTHER" id="PTHR11332:SF6">
    <property type="entry name" value="SECRETOGLOBIN FAMILY 1D MEMBER 4"/>
    <property type="match status" value="1"/>
</dbReference>
<dbReference type="Pfam" id="PF01099">
    <property type="entry name" value="Uteroglobin"/>
    <property type="match status" value="1"/>
</dbReference>
<dbReference type="SUPFAM" id="SSF48201">
    <property type="entry name" value="Uteroglobin-like"/>
    <property type="match status" value="1"/>
</dbReference>
<dbReference type="PROSITE" id="PS51311">
    <property type="entry name" value="SCGB"/>
    <property type="match status" value="1"/>
</dbReference>
<evidence type="ECO:0000269" key="1">
    <source>
    </source>
</evidence>
<evidence type="ECO:0000305" key="2"/>
<evidence type="ECO:0000305" key="3">
    <source>
    </source>
</evidence>
<keyword id="KW-0903">Direct protein sequencing</keyword>
<keyword id="KW-1015">Disulfide bond</keyword>
<keyword id="KW-0446">Lipid-binding</keyword>
<keyword id="KW-0873">Pyrrolidone carboxylic acid</keyword>
<keyword id="KW-1185">Reference proteome</keyword>
<keyword id="KW-0964">Secreted</keyword>
<keyword id="KW-0732">Signal</keyword>
<keyword id="KW-0754">Steroid-binding</keyword>
<gene>
    <name type="primary">Psbpc2</name>
</gene>
<proteinExistence type="evidence at protein level"/>
<feature type="signal peptide" evidence="1">
    <location>
        <begin position="1"/>
        <end position="20"/>
    </location>
</feature>
<feature type="chain" id="PRO_0000036376" description="Prostatic steroid-binding protein C2">
    <location>
        <begin position="21"/>
        <end position="112"/>
    </location>
</feature>
<feature type="modified residue" description="Pyrrolidone carboxylic acid" evidence="3">
    <location>
        <position position="21"/>
    </location>
</feature>
<feature type="disulfide bond" description="Interchain (with C3 chain)" evidence="2">
    <location>
        <position position="28"/>
    </location>
</feature>
<feature type="disulfide bond" description="Interchain (with C3 chain)" evidence="2">
    <location>
        <position position="69"/>
    </location>
</feature>
<feature type="disulfide bond" description="Interchain (with C3 chain)" evidence="2">
    <location>
        <position position="92"/>
    </location>
</feature>
<feature type="sequence conflict" description="In Ref. 3; CAA24569/AAA51641." evidence="2" ref="3">
    <location>
        <position position="26"/>
    </location>
</feature>
<feature type="sequence conflict" description="In Ref. 3; CAA24569/AAA51641." evidence="2" ref="3">
    <original>I</original>
    <variation>T</variation>
    <location>
        <position position="88"/>
    </location>
</feature>
<feature type="sequence conflict" description="In Ref. 3; CAA24569." evidence="2" ref="3">
    <original>VWLQINFPRGRWFSEIN</original>
    <variation>YGYK</variation>
    <location>
        <begin position="96"/>
        <end position="112"/>
    </location>
</feature>
<accession>P02781</accession>
<sequence>MRLSLCLLTILVVCCYEANGQTLAGQVCQALQDVTITFLLNPEEELKRELEEFDAPPEAVEANLKVKRCINKIMYGDRLSMGTSLVFIMLKCDVKVWLQINFPRGRWFSEIN</sequence>
<reference key="1">
    <citation type="journal article" date="1987" name="Nucleic Acids Res.">
        <title>Rat prostatic binding protein: the complete sequence of the C2 gene and its flanking regions.</title>
        <authorList>
            <person name="Delaey B."/>
            <person name="Dirckx L."/>
            <person name="Decourt J.-L."/>
            <person name="Claessens F."/>
            <person name="Peeters B."/>
            <person name="Rombauts W."/>
        </authorList>
    </citation>
    <scope>NUCLEOTIDE SEQUENCE [GENOMIC DNA]</scope>
</reference>
<reference key="2">
    <citation type="journal article" date="1983" name="Eur. J. Biochem.">
        <title>Structural studies on rat prostatic binding protein. The primary structure of component C2 from subunit S.</title>
        <authorList>
            <person name="Peeters B."/>
            <person name="Heyns W."/>
            <person name="Mous J."/>
            <person name="Rombauts W."/>
        </authorList>
    </citation>
    <scope>PROTEIN SEQUENCE OF 21-112</scope>
    <scope>PYROGLUTAMATE FORMATION AT GLN-21</scope>
</reference>
<reference key="3">
    <citation type="journal article" date="1982" name="Nature">
        <title>Prostatic steroid binding protein: gene duplication and steroid binding.</title>
        <authorList>
            <person name="Parker M.G."/>
            <person name="Needham M."/>
            <person name="White R."/>
        </authorList>
    </citation>
    <scope>NUCLEOTIDE SEQUENCE [MRNA] OF 1-100</scope>
</reference>
<organism>
    <name type="scientific">Rattus norvegicus</name>
    <name type="common">Rat</name>
    <dbReference type="NCBI Taxonomy" id="10116"/>
    <lineage>
        <taxon>Eukaryota</taxon>
        <taxon>Metazoa</taxon>
        <taxon>Chordata</taxon>
        <taxon>Craniata</taxon>
        <taxon>Vertebrata</taxon>
        <taxon>Euteleostomi</taxon>
        <taxon>Mammalia</taxon>
        <taxon>Eutheria</taxon>
        <taxon>Euarchontoglires</taxon>
        <taxon>Glires</taxon>
        <taxon>Rodentia</taxon>
        <taxon>Myomorpha</taxon>
        <taxon>Muroidea</taxon>
        <taxon>Muridae</taxon>
        <taxon>Murinae</taxon>
        <taxon>Rattus</taxon>
    </lineage>
</organism>
<comment type="function">
    <text>Part of prostatein which is the major secretory glycoprotein of ventral prostate gland.</text>
</comment>
<comment type="subunit">
    <text>Prostatein is composed of three different peptides called C1, C2 and C3. These form covalent C1:C3 (F) and C2:C3 (S) heterodimers whose noncovalent association forms tetrameric (C1:C3/C3:C2) prostatein molecules.</text>
</comment>
<comment type="subcellular location">
    <subcellularLocation>
        <location>Secreted</location>
    </subcellularLocation>
</comment>
<comment type="PTM">
    <text>Linked by three disulfide bonds to C3.</text>
</comment>
<comment type="PTM">
    <text evidence="1">The N-terminus is blocked.</text>
</comment>
<comment type="miscellaneous">
    <text>The heterodimer can bind non-polar steroids, cholesterol and a group of small proline-rich peptides.</text>
</comment>
<comment type="similarity">
    <text evidence="2">Belongs to the secretoglobin family. Lipophilin subfamily.</text>
</comment>